<gene>
    <name type="primary">NOSIP</name>
</gene>
<accession>Q3SWY5</accession>
<sequence length="302" mass="33043">MTRHGKNCTAGAVYTYHEKKKDTAASGYGTQNIRLSRDAVKDFDCCCLSLQPCHDPVVTPDGYLYEREAILEYILHQKKEIARQMKAYEKQRGARREEQKELQRAAAQDHVRGFLEKEAAIVSRPLNPFTPKAASAGNGPDDAQPGSSAGPAGKDKDKALPSFWIPSLTPEAKATKLEKPSRIVTCPMSGKPLRMSDLTPVRFTPLDSSVDRVGLITRSERYVCAVTRDSLSNATPCAVLRPSGAVVTLECVEKLIRKDMVDPVTGEKLTDRDIIVLQRGGTGFAGSGVKLQAEKSRPVMQA</sequence>
<reference key="1">
    <citation type="submission" date="2005-09" db="EMBL/GenBank/DDBJ databases">
        <authorList>
            <consortium name="NIH - Mammalian Gene Collection (MGC) project"/>
        </authorList>
    </citation>
    <scope>NUCLEOTIDE SEQUENCE [LARGE SCALE MRNA]</scope>
    <source>
        <strain>Hereford</strain>
        <tissue>Ascending colon</tissue>
    </source>
</reference>
<proteinExistence type="evidence at transcript level"/>
<feature type="chain" id="PRO_0000280584" description="Nitric oxide synthase-interacting protein">
    <location>
        <begin position="1"/>
        <end position="302"/>
    </location>
</feature>
<feature type="region of interest" description="U-box-like">
    <location>
        <begin position="55"/>
        <end position="75"/>
    </location>
</feature>
<feature type="region of interest" description="Disordered" evidence="4">
    <location>
        <begin position="126"/>
        <end position="156"/>
    </location>
</feature>
<feature type="short sequence motif" description="Nuclear localization signal" evidence="1">
    <location>
        <begin position="78"/>
        <end position="101"/>
    </location>
</feature>
<feature type="modified residue" description="Phosphoserine" evidence="3">
    <location>
        <position position="36"/>
    </location>
</feature>
<comment type="function">
    <text evidence="2 3">E3 ubiquitin-protein ligase that is essential for proper development of the forebrain, the eye, and the face. Catalyzes monoubiquitination of serine/threonine-protein phosphatase 2A (PP2A) catalytic subunit PPP2CA/PPP2CB (By similarity). Negatively regulates nitric oxide production by inducing NOS1 and NOS3 translocation to actin cytoskeleton and inhibiting their enzymatic activity (By similarity).</text>
</comment>
<comment type="catalytic activity">
    <reaction>
        <text>S-ubiquitinyl-[E2 ubiquitin-conjugating enzyme]-L-cysteine + [acceptor protein]-L-lysine = [E2 ubiquitin-conjugating enzyme]-L-cysteine + N(6)-ubiquitinyl-[acceptor protein]-L-lysine.</text>
        <dbReference type="EC" id="2.3.2.27"/>
    </reaction>
</comment>
<comment type="subunit">
    <text evidence="2 3">Interacts with NOS1 and NOS3 (By similarity). Interacts with PP2A holoenzyme, containing PPP2CA, PPP2CB, PPP2R1A and PPP2R2A subunits (By similarity).</text>
</comment>
<comment type="subcellular location">
    <subcellularLocation>
        <location evidence="3">Cytoplasm</location>
    </subcellularLocation>
    <subcellularLocation>
        <location evidence="3">Nucleus</location>
    </subcellularLocation>
    <text evidence="3">Translocates from nucleus to cytoplasm in the G2 phase of the cell cycle.</text>
</comment>
<comment type="domain">
    <text>The U-box-like region is a truncated U-box domain. It is unknown whether it is functional or not.</text>
</comment>
<comment type="similarity">
    <text evidence="5">Belongs to the NOSIP family.</text>
</comment>
<name>NOSIP_BOVIN</name>
<keyword id="KW-0963">Cytoplasm</keyword>
<keyword id="KW-0217">Developmental protein</keyword>
<keyword id="KW-0539">Nucleus</keyword>
<keyword id="KW-0597">Phosphoprotein</keyword>
<keyword id="KW-1185">Reference proteome</keyword>
<keyword id="KW-0808">Transferase</keyword>
<keyword id="KW-0833">Ubl conjugation pathway</keyword>
<protein>
    <recommendedName>
        <fullName>Nitric oxide synthase-interacting protein</fullName>
    </recommendedName>
    <alternativeName>
        <fullName>E3 ubiquitin-protein ligase NOSIP</fullName>
        <ecNumber>2.3.2.27</ecNumber>
    </alternativeName>
    <alternativeName>
        <fullName evidence="5">RING-type E3 ubiquitin transferase NOSIP</fullName>
    </alternativeName>
</protein>
<dbReference type="EC" id="2.3.2.27"/>
<dbReference type="EMBL" id="BC104600">
    <property type="protein sequence ID" value="AAI04601.1"/>
    <property type="molecule type" value="mRNA"/>
</dbReference>
<dbReference type="RefSeq" id="NP_001068970.1">
    <property type="nucleotide sequence ID" value="NM_001075502.1"/>
</dbReference>
<dbReference type="SMR" id="Q3SWY5"/>
<dbReference type="FunCoup" id="Q3SWY5">
    <property type="interactions" value="3911"/>
</dbReference>
<dbReference type="STRING" id="9913.ENSBTAP00000069400"/>
<dbReference type="PaxDb" id="9913-ENSBTAP00000019215"/>
<dbReference type="Ensembl" id="ENSBTAT00000019215.4">
    <property type="protein sequence ID" value="ENSBTAP00000019215.3"/>
    <property type="gene ID" value="ENSBTAG00000014450.5"/>
</dbReference>
<dbReference type="GeneID" id="511234"/>
<dbReference type="KEGG" id="bta:511234"/>
<dbReference type="CTD" id="51070"/>
<dbReference type="VEuPathDB" id="HostDB:ENSBTAG00000014450"/>
<dbReference type="VGNC" id="VGNC:32175">
    <property type="gene designation" value="NOSIP"/>
</dbReference>
<dbReference type="eggNOG" id="KOG3039">
    <property type="taxonomic scope" value="Eukaryota"/>
</dbReference>
<dbReference type="GeneTree" id="ENSGT00390000015505"/>
<dbReference type="HOGENOM" id="CLU_053742_0_0_1"/>
<dbReference type="InParanoid" id="Q3SWY5"/>
<dbReference type="OMA" id="PCVTKFM"/>
<dbReference type="OrthoDB" id="116827at2759"/>
<dbReference type="TreeFam" id="TF314268"/>
<dbReference type="Reactome" id="R-BTA-203754">
    <property type="pathway name" value="NOSIP mediated eNOS trafficking"/>
</dbReference>
<dbReference type="Proteomes" id="UP000009136">
    <property type="component" value="Chromosome 18"/>
</dbReference>
<dbReference type="Bgee" id="ENSBTAG00000014450">
    <property type="expression patterns" value="Expressed in laryngeal cartilage and 107 other cell types or tissues"/>
</dbReference>
<dbReference type="GO" id="GO:0005737">
    <property type="term" value="C:cytoplasm"/>
    <property type="evidence" value="ECO:0007669"/>
    <property type="project" value="UniProtKB-SubCell"/>
</dbReference>
<dbReference type="GO" id="GO:0005654">
    <property type="term" value="C:nucleoplasm"/>
    <property type="evidence" value="ECO:0007669"/>
    <property type="project" value="Ensembl"/>
</dbReference>
<dbReference type="GO" id="GO:0005634">
    <property type="term" value="C:nucleus"/>
    <property type="evidence" value="ECO:0000318"/>
    <property type="project" value="GO_Central"/>
</dbReference>
<dbReference type="GO" id="GO:0140313">
    <property type="term" value="F:molecular sequestering activity"/>
    <property type="evidence" value="ECO:0007669"/>
    <property type="project" value="Ensembl"/>
</dbReference>
<dbReference type="GO" id="GO:0061630">
    <property type="term" value="F:ubiquitin protein ligase activity"/>
    <property type="evidence" value="ECO:0007669"/>
    <property type="project" value="InterPro"/>
</dbReference>
<dbReference type="GO" id="GO:0045428">
    <property type="term" value="P:regulation of nitric oxide biosynthetic process"/>
    <property type="evidence" value="ECO:0007669"/>
    <property type="project" value="Ensembl"/>
</dbReference>
<dbReference type="CDD" id="cd16661">
    <property type="entry name" value="RING-Ubox1_NOSIP"/>
    <property type="match status" value="1"/>
</dbReference>
<dbReference type="CDD" id="cd16662">
    <property type="entry name" value="RING-Ubox2_NOSIP"/>
    <property type="match status" value="1"/>
</dbReference>
<dbReference type="FunFam" id="3.30.40.10:FF:000251">
    <property type="entry name" value="Nitric oxide synthase-interacting protein"/>
    <property type="match status" value="1"/>
</dbReference>
<dbReference type="FunFam" id="3.30.40.10:FF:001144">
    <property type="entry name" value="Nitric oxide synthase-interacting protein"/>
    <property type="match status" value="1"/>
</dbReference>
<dbReference type="Gene3D" id="3.30.40.10">
    <property type="entry name" value="Zinc/RING finger domain, C3HC4 (zinc finger)"/>
    <property type="match status" value="2"/>
</dbReference>
<dbReference type="InterPro" id="IPR016818">
    <property type="entry name" value="NOSIP"/>
</dbReference>
<dbReference type="InterPro" id="IPR031790">
    <property type="entry name" value="Znf-NOSIP"/>
</dbReference>
<dbReference type="InterPro" id="IPR013083">
    <property type="entry name" value="Znf_RING/FYVE/PHD"/>
</dbReference>
<dbReference type="PANTHER" id="PTHR13063">
    <property type="entry name" value="ENOS INTERACTING PROTEIN"/>
    <property type="match status" value="1"/>
</dbReference>
<dbReference type="PANTHER" id="PTHR13063:SF10">
    <property type="entry name" value="NITRIC OXIDE SYNTHASE-INTERACTING PROTEIN"/>
    <property type="match status" value="1"/>
</dbReference>
<dbReference type="Pfam" id="PF15906">
    <property type="entry name" value="zf-NOSIP"/>
    <property type="match status" value="1"/>
</dbReference>
<dbReference type="PIRSF" id="PIRSF023577">
    <property type="entry name" value="ENOS_interacting"/>
    <property type="match status" value="1"/>
</dbReference>
<dbReference type="SUPFAM" id="SSF57850">
    <property type="entry name" value="RING/U-box"/>
    <property type="match status" value="2"/>
</dbReference>
<organism>
    <name type="scientific">Bos taurus</name>
    <name type="common">Bovine</name>
    <dbReference type="NCBI Taxonomy" id="9913"/>
    <lineage>
        <taxon>Eukaryota</taxon>
        <taxon>Metazoa</taxon>
        <taxon>Chordata</taxon>
        <taxon>Craniata</taxon>
        <taxon>Vertebrata</taxon>
        <taxon>Euteleostomi</taxon>
        <taxon>Mammalia</taxon>
        <taxon>Eutheria</taxon>
        <taxon>Laurasiatheria</taxon>
        <taxon>Artiodactyla</taxon>
        <taxon>Ruminantia</taxon>
        <taxon>Pecora</taxon>
        <taxon>Bovidae</taxon>
        <taxon>Bovinae</taxon>
        <taxon>Bos</taxon>
    </lineage>
</organism>
<evidence type="ECO:0000250" key="1"/>
<evidence type="ECO:0000250" key="2">
    <source>
        <dbReference type="UniProtKB" id="Q9D6T0"/>
    </source>
</evidence>
<evidence type="ECO:0000250" key="3">
    <source>
        <dbReference type="UniProtKB" id="Q9Y314"/>
    </source>
</evidence>
<evidence type="ECO:0000256" key="4">
    <source>
        <dbReference type="SAM" id="MobiDB-lite"/>
    </source>
</evidence>
<evidence type="ECO:0000305" key="5"/>